<comment type="function">
    <text evidence="1">Catalyzes the decarboxylative condensation of pimeloyl-[acyl-carrier protein] and L-alanine to produce 8-amino-7-oxononanoate (AON), [acyl-carrier protein], and carbon dioxide.</text>
</comment>
<comment type="catalytic activity">
    <reaction evidence="1">
        <text>6-carboxyhexanoyl-[ACP] + L-alanine + H(+) = (8S)-8-amino-7-oxononanoate + holo-[ACP] + CO2</text>
        <dbReference type="Rhea" id="RHEA:42288"/>
        <dbReference type="Rhea" id="RHEA-COMP:9685"/>
        <dbReference type="Rhea" id="RHEA-COMP:9955"/>
        <dbReference type="ChEBI" id="CHEBI:15378"/>
        <dbReference type="ChEBI" id="CHEBI:16526"/>
        <dbReference type="ChEBI" id="CHEBI:57972"/>
        <dbReference type="ChEBI" id="CHEBI:64479"/>
        <dbReference type="ChEBI" id="CHEBI:78846"/>
        <dbReference type="ChEBI" id="CHEBI:149468"/>
        <dbReference type="EC" id="2.3.1.47"/>
    </reaction>
</comment>
<comment type="cofactor">
    <cofactor evidence="1">
        <name>pyridoxal 5'-phosphate</name>
        <dbReference type="ChEBI" id="CHEBI:597326"/>
    </cofactor>
</comment>
<comment type="pathway">
    <text evidence="1">Cofactor biosynthesis; biotin biosynthesis.</text>
</comment>
<comment type="subunit">
    <text evidence="1">Homodimer.</text>
</comment>
<comment type="similarity">
    <text evidence="1">Belongs to the class-II pyridoxal-phosphate-dependent aminotransferase family. BioF subfamily.</text>
</comment>
<accession>Q48CS2</accession>
<sequence>MSFDLRTRLDARRAEHLYRQRPLLQSPQGPQVVVDGQPLLAFCNNDYMGLANHPEVIAAWQAGAERWGVGGGASHLVIGHSTPHHELEEALAELTGRPRALLFSNGYMANLGAVTALVGQGDTVLEDRLNHASLLDAGLLSGARFSRYLHNDVTSLASHLEKSVGDTLVVTDGVFSMDGDIADLPALAQAAKAKGAWLMVDDAHGFGPLGANGAGIVEHFGLSMEDVPVLVGTLGKSFGTSGAFVAGSEELIETLIQFARPYIYTTSQPPALACATLKSLQLLRTEHWRREHLASLIQQFRQGAEQIGLQLMDSFTPIQPILIGDAGRALRLSQLLRERGLLVTAIRPPTVPAGSARLRVTLSAAHSKADVQLLLEALEQCYPLLDASESTEPVHA</sequence>
<protein>
    <recommendedName>
        <fullName evidence="1">8-amino-7-oxononanoate synthase</fullName>
        <shortName evidence="1">AONS</shortName>
        <ecNumber evidence="1">2.3.1.47</ecNumber>
    </recommendedName>
    <alternativeName>
        <fullName evidence="1">7-keto-8-amino-pelargonic acid synthase</fullName>
        <shortName evidence="1">7-KAP synthase</shortName>
        <shortName evidence="1">KAPA synthase</shortName>
    </alternativeName>
    <alternativeName>
        <fullName evidence="1">8-amino-7-ketopelargonate synthase</fullName>
    </alternativeName>
</protein>
<feature type="chain" id="PRO_0000381071" description="8-amino-7-oxononanoate synthase">
    <location>
        <begin position="1"/>
        <end position="396"/>
    </location>
</feature>
<feature type="binding site" evidence="1">
    <location>
        <position position="19"/>
    </location>
    <ligand>
        <name>substrate</name>
    </ligand>
</feature>
<feature type="binding site" evidence="1">
    <location>
        <begin position="106"/>
        <end position="107"/>
    </location>
    <ligand>
        <name>pyridoxal 5'-phosphate</name>
        <dbReference type="ChEBI" id="CHEBI:597326"/>
    </ligand>
</feature>
<feature type="binding site" evidence="1">
    <location>
        <position position="131"/>
    </location>
    <ligand>
        <name>substrate</name>
    </ligand>
</feature>
<feature type="binding site" evidence="1">
    <location>
        <position position="176"/>
    </location>
    <ligand>
        <name>pyridoxal 5'-phosphate</name>
        <dbReference type="ChEBI" id="CHEBI:597326"/>
    </ligand>
</feature>
<feature type="binding site" evidence="1">
    <location>
        <position position="204"/>
    </location>
    <ligand>
        <name>pyridoxal 5'-phosphate</name>
        <dbReference type="ChEBI" id="CHEBI:597326"/>
    </ligand>
</feature>
<feature type="binding site" evidence="1">
    <location>
        <position position="233"/>
    </location>
    <ligand>
        <name>pyridoxal 5'-phosphate</name>
        <dbReference type="ChEBI" id="CHEBI:597326"/>
    </ligand>
</feature>
<feature type="binding site" evidence="1">
    <location>
        <position position="350"/>
    </location>
    <ligand>
        <name>substrate</name>
    </ligand>
</feature>
<feature type="modified residue" description="N6-(pyridoxal phosphate)lysine" evidence="1">
    <location>
        <position position="236"/>
    </location>
</feature>
<name>BIOF_PSE14</name>
<reference key="1">
    <citation type="journal article" date="2005" name="J. Bacteriol.">
        <title>Whole-genome sequence analysis of Pseudomonas syringae pv. phaseolicola 1448A reveals divergence among pathovars in genes involved in virulence and transposition.</title>
        <authorList>
            <person name="Joardar V."/>
            <person name="Lindeberg M."/>
            <person name="Jackson R.W."/>
            <person name="Selengut J."/>
            <person name="Dodson R."/>
            <person name="Brinkac L.M."/>
            <person name="Daugherty S.C."/>
            <person name="DeBoy R.T."/>
            <person name="Durkin A.S."/>
            <person name="Gwinn Giglio M."/>
            <person name="Madupu R."/>
            <person name="Nelson W.C."/>
            <person name="Rosovitz M.J."/>
            <person name="Sullivan S.A."/>
            <person name="Crabtree J."/>
            <person name="Creasy T."/>
            <person name="Davidsen T.M."/>
            <person name="Haft D.H."/>
            <person name="Zafar N."/>
            <person name="Zhou L."/>
            <person name="Halpin R."/>
            <person name="Holley T."/>
            <person name="Khouri H.M."/>
            <person name="Feldblyum T.V."/>
            <person name="White O."/>
            <person name="Fraser C.M."/>
            <person name="Chatterjee A.K."/>
            <person name="Cartinhour S."/>
            <person name="Schneider D."/>
            <person name="Mansfield J.W."/>
            <person name="Collmer A."/>
            <person name="Buell R."/>
        </authorList>
    </citation>
    <scope>NUCLEOTIDE SEQUENCE [LARGE SCALE GENOMIC DNA]</scope>
    <source>
        <strain>1448A / Race 6</strain>
    </source>
</reference>
<evidence type="ECO:0000255" key="1">
    <source>
        <dbReference type="HAMAP-Rule" id="MF_01693"/>
    </source>
</evidence>
<proteinExistence type="inferred from homology"/>
<keyword id="KW-0093">Biotin biosynthesis</keyword>
<keyword id="KW-0663">Pyridoxal phosphate</keyword>
<keyword id="KW-0808">Transferase</keyword>
<gene>
    <name evidence="1" type="primary">bioF</name>
    <name type="ordered locus">PSPPH_4720</name>
</gene>
<organism>
    <name type="scientific">Pseudomonas savastanoi pv. phaseolicola (strain 1448A / Race 6)</name>
    <name type="common">Pseudomonas syringae pv. phaseolicola (strain 1448A / Race 6)</name>
    <dbReference type="NCBI Taxonomy" id="264730"/>
    <lineage>
        <taxon>Bacteria</taxon>
        <taxon>Pseudomonadati</taxon>
        <taxon>Pseudomonadota</taxon>
        <taxon>Gammaproteobacteria</taxon>
        <taxon>Pseudomonadales</taxon>
        <taxon>Pseudomonadaceae</taxon>
        <taxon>Pseudomonas</taxon>
    </lineage>
</organism>
<dbReference type="EC" id="2.3.1.47" evidence="1"/>
<dbReference type="EMBL" id="CP000058">
    <property type="protein sequence ID" value="AAZ35773.1"/>
    <property type="molecule type" value="Genomic_DNA"/>
</dbReference>
<dbReference type="RefSeq" id="WP_011169709.1">
    <property type="nucleotide sequence ID" value="NC_005773.3"/>
</dbReference>
<dbReference type="SMR" id="Q48CS2"/>
<dbReference type="KEGG" id="psp:PSPPH_4720"/>
<dbReference type="eggNOG" id="COG0156">
    <property type="taxonomic scope" value="Bacteria"/>
</dbReference>
<dbReference type="HOGENOM" id="CLU_015846_11_0_6"/>
<dbReference type="UniPathway" id="UPA00078"/>
<dbReference type="Proteomes" id="UP000000551">
    <property type="component" value="Chromosome"/>
</dbReference>
<dbReference type="GO" id="GO:0008710">
    <property type="term" value="F:8-amino-7-oxononanoate synthase activity"/>
    <property type="evidence" value="ECO:0007669"/>
    <property type="project" value="UniProtKB-UniRule"/>
</dbReference>
<dbReference type="GO" id="GO:0030170">
    <property type="term" value="F:pyridoxal phosphate binding"/>
    <property type="evidence" value="ECO:0007669"/>
    <property type="project" value="UniProtKB-UniRule"/>
</dbReference>
<dbReference type="GO" id="GO:0009102">
    <property type="term" value="P:biotin biosynthetic process"/>
    <property type="evidence" value="ECO:0007669"/>
    <property type="project" value="UniProtKB-UniRule"/>
</dbReference>
<dbReference type="CDD" id="cd06454">
    <property type="entry name" value="KBL_like"/>
    <property type="match status" value="1"/>
</dbReference>
<dbReference type="Gene3D" id="3.90.1150.10">
    <property type="entry name" value="Aspartate Aminotransferase, domain 1"/>
    <property type="match status" value="1"/>
</dbReference>
<dbReference type="Gene3D" id="3.40.640.10">
    <property type="entry name" value="Type I PLP-dependent aspartate aminotransferase-like (Major domain)"/>
    <property type="match status" value="1"/>
</dbReference>
<dbReference type="HAMAP" id="MF_01693">
    <property type="entry name" value="BioF_aminotrans_2"/>
    <property type="match status" value="1"/>
</dbReference>
<dbReference type="InterPro" id="IPR001917">
    <property type="entry name" value="Aminotrans_II_pyridoxalP_BS"/>
</dbReference>
<dbReference type="InterPro" id="IPR004839">
    <property type="entry name" value="Aminotransferase_I/II_large"/>
</dbReference>
<dbReference type="InterPro" id="IPR050087">
    <property type="entry name" value="AON_synthase_class-II"/>
</dbReference>
<dbReference type="InterPro" id="IPR004723">
    <property type="entry name" value="AONS_Archaea/Proteobacteria"/>
</dbReference>
<dbReference type="InterPro" id="IPR022834">
    <property type="entry name" value="AONS_Proteobacteria"/>
</dbReference>
<dbReference type="InterPro" id="IPR015424">
    <property type="entry name" value="PyrdxlP-dep_Trfase"/>
</dbReference>
<dbReference type="InterPro" id="IPR015421">
    <property type="entry name" value="PyrdxlP-dep_Trfase_major"/>
</dbReference>
<dbReference type="InterPro" id="IPR015422">
    <property type="entry name" value="PyrdxlP-dep_Trfase_small"/>
</dbReference>
<dbReference type="NCBIfam" id="TIGR00858">
    <property type="entry name" value="bioF"/>
    <property type="match status" value="1"/>
</dbReference>
<dbReference type="PANTHER" id="PTHR13693:SF100">
    <property type="entry name" value="8-AMINO-7-OXONONANOATE SYNTHASE"/>
    <property type="match status" value="1"/>
</dbReference>
<dbReference type="PANTHER" id="PTHR13693">
    <property type="entry name" value="CLASS II AMINOTRANSFERASE/8-AMINO-7-OXONONANOATE SYNTHASE"/>
    <property type="match status" value="1"/>
</dbReference>
<dbReference type="Pfam" id="PF00155">
    <property type="entry name" value="Aminotran_1_2"/>
    <property type="match status" value="1"/>
</dbReference>
<dbReference type="SUPFAM" id="SSF53383">
    <property type="entry name" value="PLP-dependent transferases"/>
    <property type="match status" value="1"/>
</dbReference>
<dbReference type="PROSITE" id="PS00599">
    <property type="entry name" value="AA_TRANSFER_CLASS_2"/>
    <property type="match status" value="1"/>
</dbReference>